<comment type="function">
    <text evidence="1">Self-assembles to form an icosahedral capsid with a T=16 symmetry, about 200 nm in diameter, and consisting of 150 hexons and 12 pentons (total of 162 capsomers). Hexons form the edges and faces of the capsid and are each composed of six MCP molecules. In contrast, one penton is found at each of the 12 vertices. Eleven of the pentons are MCP pentamers, while the last vertex is occupied by the portal complex. The capsid is surrounded by a layer of proteinaceous material designated the tegument which, in turn, is enclosed in an envelope of host cell-derived lipids containing virus-encoded glycoproteins.</text>
</comment>
<comment type="subunit">
    <text evidence="1">Homomultimer. Makes the hexons and eleven out of twelve pentons. Interacts with triplex proteins 1/TRX1 and 2/TRX2; adjacent capsomers are linked together in groups of three by triplexes, heterotrimeric complexes composed of one molecule of TRX1 and two molecules of TRX2. Interacts with scaffold protein; this interaction allows efficient MCP transport to the host nucleus. Interacts with capsid vertex component 2/CVC2. Interacts with the small capsomere-interacting protein/SCP.</text>
</comment>
<comment type="subcellular location">
    <subcellularLocation>
        <location evidence="1">Virion</location>
    </subcellularLocation>
    <subcellularLocation>
        <location evidence="1">Host nucleus</location>
    </subcellularLocation>
</comment>
<comment type="similarity">
    <text evidence="1">Belongs to the herpesviridae major capsid protein family.</text>
</comment>
<name>MCP_PSHV1</name>
<sequence length="1413" mass="154177">MDGHGCSSSQAMCRGAFGNVATRPAPFPRSAAPFVVAGESLGALRDKCHAYFYDSFSSFTGVDCCYGSRFDILLGSYFNTITLSHFLETGLSIACICVKFPELKYAEDGIVQFVVANPMIARSDCEVPSRPSYTYVTKKWSRTTLTSSLSICGPALELLTGDALDGTEIANFSRARAMNQLARDLKLTLDSFERGTVHHVLGILIRKAPPMPLLQPLMAAMARERDMNVVARANILSAMKNAVREHLFFMDKESRGDPQDIARGLLSLINCTLPSVSDTRVTHVGPGGRPIDGVLVTTEAVKGLVTQALTLTASEATVPAMYGELSISGTNLVTALLMGKAIRNFNEAARNLLNFADGNVDVSDFPDIPQDGEDAPRTMSVNMSLVTVGDSLVAVEALERIYARTGVPYPLAGNVDLTFFFPLGLFKPHKDRYAIGGLILPDTAEAAVDGRLFPPTEMFFFDKDEQLRSVSFESSLGTVAHPIAHGIMETLQELSQEQWVQARPPAPMDFTIQRMSQQPPRAQMVEFLTAVATAVTAPHPSATLINRRSTDQFLSHTNPFLQLEVHPFYDVYRVAQDLQTPSDAALFAPVEPSTLAASRRLCNGDIPLPLSSADFRSSRGRQLAACGAMLSSQAAAAIETTLSDPNYPVAFYVIEACLHGDETLFLESQRLVAQCIESYWVSAGGLAFVNSFAMIMYITHNLSSLVNRNCHALYAEIVAVLNSMRAAVSRFTQSGDALLQHTQEELNHLLMDPAVFPPILYDCDPIIRVTGAYAARNITIRTLGERAPVVSTRDWPPQADFGAINITLNHGPPYTARGRADGGAHHDSEWTVLNKIFYYALLPALARGRCCSVGVEFEMVYNLINTTRLPANADDLAAPEANPLHVNNLAPDSFNALLHNSGVALVDAEALVAFIAAARLRQVAHTLPLRVSYSADPGFATIDSPNTAFTDGVLYNGLIMMNYPQYDATLVASRYFYALPVNGFYANRTIVEATHRGAVNLGEVPEDLPLVPTFLGAEAYRSIRAPSYMYCAKQCASGTASAGAVAYGLMAGYFKTSPVALTHQLKSGLHPGFALTVARQDRFYADQILFARRLSESYYMGAPTTESRAENNSLMIDIHQPRSHVDMGLGFTASRMPAKLNTVVTDMGSRSQNLFDARYPGQFRYLEVADFIASEITDDDSLAMPRARPPLMLPYEAPPLPPCLERGQRATCEFLITPVTADLKYFYGPANPRGRSSCVACMPHEDPSRDSVDRAMYDHTTPDAAFPSRATNNPWASQRFSLGDRMYNARRGFIVTSDFFSPLGKFMTPSRVEDKNRCLARLLRESATAVSSVTGNTEFQFVAPVGSNELITDPCAIFQEAYPILCASDKALFASYENPRKAVGTGARENHFAQYLIHDASPLSGVLKCNGKL</sequence>
<reference key="1">
    <citation type="journal article" date="2006" name="J. Virol.">
        <title>Psittacid herpesvirus 1 and infectious laryngotracheitis virus: Comparative genome sequence analysis of two avian alphaherpesviruses.</title>
        <authorList>
            <person name="Thureen D.R."/>
            <person name="Keeler C.L. Jr."/>
        </authorList>
    </citation>
    <scope>NUCLEOTIDE SEQUENCE [LARGE SCALE GENOMIC DNA]</scope>
</reference>
<feature type="chain" id="PRO_0000406817" description="Major capsid protein">
    <location>
        <begin position="1"/>
        <end position="1413"/>
    </location>
</feature>
<protein>
    <recommendedName>
        <fullName evidence="1">Major capsid protein</fullName>
        <shortName evidence="1">MCP</shortName>
    </recommendedName>
</protein>
<keyword id="KW-0167">Capsid protein</keyword>
<keyword id="KW-1048">Host nucleus</keyword>
<keyword id="KW-1185">Reference proteome</keyword>
<keyword id="KW-1147">T=16 icosahedral capsid protein</keyword>
<keyword id="KW-0946">Virion</keyword>
<dbReference type="EMBL" id="AY372243">
    <property type="protein sequence ID" value="AAQ73726.1"/>
    <property type="molecule type" value="Genomic_DNA"/>
</dbReference>
<dbReference type="RefSeq" id="NP_944420.1">
    <property type="nucleotide sequence ID" value="NC_005264.1"/>
</dbReference>
<dbReference type="SMR" id="Q6UDI4"/>
<dbReference type="GeneID" id="2657004"/>
<dbReference type="KEGG" id="vg:2657004"/>
<dbReference type="Proteomes" id="UP000006840">
    <property type="component" value="Segment"/>
</dbReference>
<dbReference type="GO" id="GO:0042025">
    <property type="term" value="C:host cell nucleus"/>
    <property type="evidence" value="ECO:0007669"/>
    <property type="project" value="UniProtKB-SubCell"/>
</dbReference>
<dbReference type="GO" id="GO:0039622">
    <property type="term" value="C:T=16 icosahedral viral capsid"/>
    <property type="evidence" value="ECO:0007669"/>
    <property type="project" value="UniProtKB-KW"/>
</dbReference>
<dbReference type="GO" id="GO:0005198">
    <property type="term" value="F:structural molecule activity"/>
    <property type="evidence" value="ECO:0007669"/>
    <property type="project" value="InterPro"/>
</dbReference>
<dbReference type="HAMAP" id="MF_04016">
    <property type="entry name" value="HSV_MCP"/>
    <property type="match status" value="1"/>
</dbReference>
<dbReference type="InterPro" id="IPR000912">
    <property type="entry name" value="Herpes_MCP"/>
</dbReference>
<dbReference type="InterPro" id="IPR023233">
    <property type="entry name" value="Herpes_MCP_upper_sf"/>
</dbReference>
<dbReference type="Pfam" id="PF03122">
    <property type="entry name" value="Herpes_MCP"/>
    <property type="match status" value="1"/>
</dbReference>
<dbReference type="PRINTS" id="PR00235">
    <property type="entry name" value="HSVCAPSIDMCP"/>
</dbReference>
<dbReference type="SUPFAM" id="SSF103417">
    <property type="entry name" value="Major capsid protein VP5"/>
    <property type="match status" value="1"/>
</dbReference>
<evidence type="ECO:0000255" key="1">
    <source>
        <dbReference type="HAMAP-Rule" id="MF_04016"/>
    </source>
</evidence>
<organism>
    <name type="scientific">Psittacid herpesvirus 1 (isolate Amazon parrot/-/97-0001/1997)</name>
    <name type="common">PsHV-1</name>
    <name type="synonym">Pacheco's disease virus</name>
    <dbReference type="NCBI Taxonomy" id="670426"/>
    <lineage>
        <taxon>Viruses</taxon>
        <taxon>Duplodnaviria</taxon>
        <taxon>Heunggongvirae</taxon>
        <taxon>Peploviricota</taxon>
        <taxon>Herviviricetes</taxon>
        <taxon>Herpesvirales</taxon>
        <taxon>Orthoherpesviridae</taxon>
        <taxon>Alphaherpesvirinae</taxon>
        <taxon>Iltovirus</taxon>
        <taxon>Iltovirus psittacidalpha1</taxon>
        <taxon>Psittacid alphaherpesvirus 1</taxon>
    </lineage>
</organism>
<gene>
    <name evidence="1" type="primary">MCP</name>
    <name type="synonym">UL19</name>
</gene>
<accession>Q6UDI4</accession>
<organismHost>
    <name type="scientific">Amazona oratrix</name>
    <name type="common">yellow-headed parrot</name>
    <dbReference type="NCBI Taxonomy" id="152276"/>
</organismHost>
<proteinExistence type="inferred from homology"/>